<protein>
    <recommendedName>
        <fullName evidence="1">Nucleotide-binding protein Swoo_4243</fullName>
    </recommendedName>
</protein>
<dbReference type="EMBL" id="CP000961">
    <property type="protein sequence ID" value="ACA88499.1"/>
    <property type="molecule type" value="Genomic_DNA"/>
</dbReference>
<dbReference type="RefSeq" id="WP_012326826.1">
    <property type="nucleotide sequence ID" value="NC_010506.1"/>
</dbReference>
<dbReference type="SMR" id="B1KIK3"/>
<dbReference type="STRING" id="392500.Swoo_4243"/>
<dbReference type="KEGG" id="swd:Swoo_4243"/>
<dbReference type="eggNOG" id="COG1660">
    <property type="taxonomic scope" value="Bacteria"/>
</dbReference>
<dbReference type="HOGENOM" id="CLU_059558_1_1_6"/>
<dbReference type="Proteomes" id="UP000002168">
    <property type="component" value="Chromosome"/>
</dbReference>
<dbReference type="GO" id="GO:0005524">
    <property type="term" value="F:ATP binding"/>
    <property type="evidence" value="ECO:0007669"/>
    <property type="project" value="UniProtKB-UniRule"/>
</dbReference>
<dbReference type="GO" id="GO:0005525">
    <property type="term" value="F:GTP binding"/>
    <property type="evidence" value="ECO:0007669"/>
    <property type="project" value="UniProtKB-UniRule"/>
</dbReference>
<dbReference type="HAMAP" id="MF_00636">
    <property type="entry name" value="RapZ_like"/>
    <property type="match status" value="1"/>
</dbReference>
<dbReference type="InterPro" id="IPR027417">
    <property type="entry name" value="P-loop_NTPase"/>
</dbReference>
<dbReference type="InterPro" id="IPR005337">
    <property type="entry name" value="RapZ-like"/>
</dbReference>
<dbReference type="InterPro" id="IPR053930">
    <property type="entry name" value="RapZ-like_N"/>
</dbReference>
<dbReference type="InterPro" id="IPR053931">
    <property type="entry name" value="RapZ_C"/>
</dbReference>
<dbReference type="NCBIfam" id="NF003828">
    <property type="entry name" value="PRK05416.1"/>
    <property type="match status" value="1"/>
</dbReference>
<dbReference type="PANTHER" id="PTHR30448">
    <property type="entry name" value="RNASE ADAPTER PROTEIN RAPZ"/>
    <property type="match status" value="1"/>
</dbReference>
<dbReference type="PANTHER" id="PTHR30448:SF0">
    <property type="entry name" value="RNASE ADAPTER PROTEIN RAPZ"/>
    <property type="match status" value="1"/>
</dbReference>
<dbReference type="Pfam" id="PF22740">
    <property type="entry name" value="PapZ_C"/>
    <property type="match status" value="1"/>
</dbReference>
<dbReference type="Pfam" id="PF03668">
    <property type="entry name" value="RapZ-like_N"/>
    <property type="match status" value="1"/>
</dbReference>
<dbReference type="PIRSF" id="PIRSF005052">
    <property type="entry name" value="P-loopkin"/>
    <property type="match status" value="1"/>
</dbReference>
<dbReference type="SUPFAM" id="SSF52540">
    <property type="entry name" value="P-loop containing nucleoside triphosphate hydrolases"/>
    <property type="match status" value="1"/>
</dbReference>
<gene>
    <name type="ordered locus">Swoo_4243</name>
</gene>
<keyword id="KW-0067">ATP-binding</keyword>
<keyword id="KW-0342">GTP-binding</keyword>
<keyword id="KW-0547">Nucleotide-binding</keyword>
<keyword id="KW-1185">Reference proteome</keyword>
<sequence>MKLVMVSGRSGSGKSVALRVLEDLGYYCVDNLPLPLMDTLLEQLKDSTELVAISVDVRNMHETELDKQLSNLPEGTELLSFFLNSSDEVLLKRYSETRRLHPLSRSKTSLKEAIDHERILLEPVSKLVDHYIDTSNLNIYDLSNQVREILLGSVDKELVINFESFGFKHGMPAEADFMFDVRFLPNPHWEPELRPMTGLDEPVQLFLSQQPTVNKFIWQIENLLETWLPHLERNNRSYLTIAIGCTGGQHRSVYVTEQLAKLFSQSKHTVQARHRELSND</sequence>
<accession>B1KIK3</accession>
<comment type="function">
    <text evidence="1">Displays ATPase and GTPase activities.</text>
</comment>
<comment type="similarity">
    <text evidence="1">Belongs to the RapZ-like family.</text>
</comment>
<reference key="1">
    <citation type="submission" date="2008-02" db="EMBL/GenBank/DDBJ databases">
        <title>Complete sequence of Shewanella woodyi ATCC 51908.</title>
        <authorList>
            <consortium name="US DOE Joint Genome Institute"/>
            <person name="Copeland A."/>
            <person name="Lucas S."/>
            <person name="Lapidus A."/>
            <person name="Glavina del Rio T."/>
            <person name="Dalin E."/>
            <person name="Tice H."/>
            <person name="Bruce D."/>
            <person name="Goodwin L."/>
            <person name="Pitluck S."/>
            <person name="Sims D."/>
            <person name="Brettin T."/>
            <person name="Detter J.C."/>
            <person name="Han C."/>
            <person name="Kuske C.R."/>
            <person name="Schmutz J."/>
            <person name="Larimer F."/>
            <person name="Land M."/>
            <person name="Hauser L."/>
            <person name="Kyrpides N."/>
            <person name="Lykidis A."/>
            <person name="Zhao J.-S."/>
            <person name="Richardson P."/>
        </authorList>
    </citation>
    <scope>NUCLEOTIDE SEQUENCE [LARGE SCALE GENOMIC DNA]</scope>
    <source>
        <strain>ATCC 51908 / MS32</strain>
    </source>
</reference>
<feature type="chain" id="PRO_1000130784" description="Nucleotide-binding protein Swoo_4243">
    <location>
        <begin position="1"/>
        <end position="280"/>
    </location>
</feature>
<feature type="binding site" evidence="1">
    <location>
        <begin position="8"/>
        <end position="15"/>
    </location>
    <ligand>
        <name>ATP</name>
        <dbReference type="ChEBI" id="CHEBI:30616"/>
    </ligand>
</feature>
<feature type="binding site" evidence="1">
    <location>
        <begin position="56"/>
        <end position="59"/>
    </location>
    <ligand>
        <name>GTP</name>
        <dbReference type="ChEBI" id="CHEBI:37565"/>
    </ligand>
</feature>
<organism>
    <name type="scientific">Shewanella woodyi (strain ATCC 51908 / MS32)</name>
    <dbReference type="NCBI Taxonomy" id="392500"/>
    <lineage>
        <taxon>Bacteria</taxon>
        <taxon>Pseudomonadati</taxon>
        <taxon>Pseudomonadota</taxon>
        <taxon>Gammaproteobacteria</taxon>
        <taxon>Alteromonadales</taxon>
        <taxon>Shewanellaceae</taxon>
        <taxon>Shewanella</taxon>
    </lineage>
</organism>
<evidence type="ECO:0000255" key="1">
    <source>
        <dbReference type="HAMAP-Rule" id="MF_00636"/>
    </source>
</evidence>
<proteinExistence type="inferred from homology"/>
<name>Y4243_SHEWM</name>